<gene>
    <name evidence="1" type="primary">rpoB</name>
    <name type="ordered locus">Rpic_3314</name>
</gene>
<sequence>MAYSFTEKKRIRKSFAKRATVHQVPFLLATQIQSYAQFLQENAPVAQRKSEGLQAAFNAIFPIVSHNGLARMEFVSYHLSNPPFDVKECQQRGLTFHSALRAKVRLIINDRENPTKVKEIKEQEVYMGEIPLMTSTGSFVINGTERVIVSQLHRSPGVFFEHDKGKTHSSGKLLFSARIIPYRGSWLDFEFDPKDILYFRVDRRRKMPVTILLKSIGLTPEQILAHFFVFDNFTLKTEGALMEFVPERLRGEVARFDISDKNGKVVVEKDKRINAKHIRDLDSAGTKLISVPEDYLLGRVLAKNIVDPDTGEVLANANDELTEGVLEKLRDAGVKEIQTLYTNDLDQGPYMSATLRTDDTADQTAARIAIYRMMRPGEPPTEDAVEALFQRLFYSEDSYDLSRVGRMKVNSRLNRSSGTGPMVLTDEDILDTIKLLVNLRNGKGEVDDIDHLGNRRVRCVGELAENQFRAGLSRVERAVKERLGQAETENLMPHDLINSKPISSAIREFFGSSQLSQFMDQTNPLSEVTHKRRISALGPGGLTRERAGFEVRDVHPTHYGRVCPIETPEGPNIGLINSLALYAQLNDYGFLETPYRKVENGKLTDQVDYLSAIEEGKYVVAQANATLDKDGNLIDELVSAREGSERETRMVTPDRVQYIDVAPSQIVSAAASLVPFLEHDDANRALMGANMQRQAVPCLRADKPLVGTGVERTVAVDSGTAVQATRGGVVDYVDANRVVIRVNDAEAVAGEVGVDIYNLIKYTRSNQNTNINQRPMVKVGDVVARGDVIADGASTDMGELALGQNMLVAFMPWNGYNFEDSILISERVVAEDRYTSIHIEELSVVARDTKLGPEEITRDISNLAEAQLARLDESGITYIGAEVEAGDVMVGKVTPKGETQLTPEEKLLRAIFGEKASDVKDTSLRVPSGMSGTVIDVQVFTREGVVRDKRAQSIIDEELKRYRLDLNDQLRIVEGDAFQRLERLLVGKIANGGPKKLAKGTALTKEYLADLDKWHWFDIRPAEDEVALQLEAVKVAIEQKRHDFDLAFEEKRKKLTQGDELPPGVIKMVKVYLAVKRRLQPGDKMAGRHGNKGVVSKITPIEDMPYMADGTPADIVLNPLGVPSRMNVGQILETHLGWAARGLGERIGNMLKAQAKAAEIRKLLGQIYNESGKVEDLDSLSDAEILELAENLKKGVPFATPVFDGAHEDEIRRMLDLAYPEDIAKEKGLTASKQQVTLFDGRTGEAFERPVTLGVMHMLKLHHLVDDKMHARSTGPYSLVTQQPLGGKAQFGGQRFGEMEVWALEAYGASYVLQEMLTVKSDDVNGRTKVYENIVKGEHSIDAGMPESFNVLVKEIRSLGIDIDLERN</sequence>
<protein>
    <recommendedName>
        <fullName evidence="1">DNA-directed RNA polymerase subunit beta</fullName>
        <shortName evidence="1">RNAP subunit beta</shortName>
        <ecNumber evidence="1">2.7.7.6</ecNumber>
    </recommendedName>
    <alternativeName>
        <fullName evidence="1">RNA polymerase subunit beta</fullName>
    </alternativeName>
    <alternativeName>
        <fullName evidence="1">Transcriptase subunit beta</fullName>
    </alternativeName>
</protein>
<reference key="1">
    <citation type="submission" date="2008-05" db="EMBL/GenBank/DDBJ databases">
        <title>Complete sequence of chromosome 1 of Ralstonia pickettii 12J.</title>
        <authorList>
            <person name="Lucas S."/>
            <person name="Copeland A."/>
            <person name="Lapidus A."/>
            <person name="Glavina del Rio T."/>
            <person name="Dalin E."/>
            <person name="Tice H."/>
            <person name="Bruce D."/>
            <person name="Goodwin L."/>
            <person name="Pitluck S."/>
            <person name="Meincke L."/>
            <person name="Brettin T."/>
            <person name="Detter J.C."/>
            <person name="Han C."/>
            <person name="Kuske C.R."/>
            <person name="Schmutz J."/>
            <person name="Larimer F."/>
            <person name="Land M."/>
            <person name="Hauser L."/>
            <person name="Kyrpides N."/>
            <person name="Mikhailova N."/>
            <person name="Marsh T."/>
            <person name="Richardson P."/>
        </authorList>
    </citation>
    <scope>NUCLEOTIDE SEQUENCE [LARGE SCALE GENOMIC DNA]</scope>
    <source>
        <strain>12J</strain>
    </source>
</reference>
<keyword id="KW-0240">DNA-directed RNA polymerase</keyword>
<keyword id="KW-0548">Nucleotidyltransferase</keyword>
<keyword id="KW-0804">Transcription</keyword>
<keyword id="KW-0808">Transferase</keyword>
<dbReference type="EC" id="2.7.7.6" evidence="1"/>
<dbReference type="EMBL" id="CP001068">
    <property type="protein sequence ID" value="ACD28436.1"/>
    <property type="molecule type" value="Genomic_DNA"/>
</dbReference>
<dbReference type="SMR" id="B2UEN6"/>
<dbReference type="STRING" id="402626.Rpic_3314"/>
<dbReference type="KEGG" id="rpi:Rpic_3314"/>
<dbReference type="eggNOG" id="COG0085">
    <property type="taxonomic scope" value="Bacteria"/>
</dbReference>
<dbReference type="HOGENOM" id="CLU_000524_4_3_4"/>
<dbReference type="GO" id="GO:0000428">
    <property type="term" value="C:DNA-directed RNA polymerase complex"/>
    <property type="evidence" value="ECO:0007669"/>
    <property type="project" value="UniProtKB-KW"/>
</dbReference>
<dbReference type="GO" id="GO:0003677">
    <property type="term" value="F:DNA binding"/>
    <property type="evidence" value="ECO:0007669"/>
    <property type="project" value="UniProtKB-UniRule"/>
</dbReference>
<dbReference type="GO" id="GO:0003899">
    <property type="term" value="F:DNA-directed RNA polymerase activity"/>
    <property type="evidence" value="ECO:0007669"/>
    <property type="project" value="UniProtKB-UniRule"/>
</dbReference>
<dbReference type="GO" id="GO:0032549">
    <property type="term" value="F:ribonucleoside binding"/>
    <property type="evidence" value="ECO:0007669"/>
    <property type="project" value="InterPro"/>
</dbReference>
<dbReference type="GO" id="GO:0006351">
    <property type="term" value="P:DNA-templated transcription"/>
    <property type="evidence" value="ECO:0007669"/>
    <property type="project" value="UniProtKB-UniRule"/>
</dbReference>
<dbReference type="CDD" id="cd00653">
    <property type="entry name" value="RNA_pol_B_RPB2"/>
    <property type="match status" value="1"/>
</dbReference>
<dbReference type="FunFam" id="2.40.50.100:FF:000006">
    <property type="entry name" value="DNA-directed RNA polymerase subunit beta"/>
    <property type="match status" value="1"/>
</dbReference>
<dbReference type="FunFam" id="2.40.50.150:FF:000001">
    <property type="entry name" value="DNA-directed RNA polymerase subunit beta"/>
    <property type="match status" value="1"/>
</dbReference>
<dbReference type="FunFam" id="3.90.1800.10:FF:000001">
    <property type="entry name" value="DNA-directed RNA polymerase subunit beta"/>
    <property type="match status" value="1"/>
</dbReference>
<dbReference type="Gene3D" id="2.40.50.100">
    <property type="match status" value="1"/>
</dbReference>
<dbReference type="Gene3D" id="2.40.50.150">
    <property type="match status" value="1"/>
</dbReference>
<dbReference type="Gene3D" id="3.90.1100.10">
    <property type="match status" value="2"/>
</dbReference>
<dbReference type="Gene3D" id="2.30.150.10">
    <property type="entry name" value="DNA-directed RNA polymerase, beta subunit, external 1 domain"/>
    <property type="match status" value="1"/>
</dbReference>
<dbReference type="Gene3D" id="2.40.270.10">
    <property type="entry name" value="DNA-directed RNA polymerase, subunit 2, domain 6"/>
    <property type="match status" value="1"/>
</dbReference>
<dbReference type="Gene3D" id="3.90.1800.10">
    <property type="entry name" value="RNA polymerase alpha subunit dimerisation domain"/>
    <property type="match status" value="1"/>
</dbReference>
<dbReference type="Gene3D" id="3.90.1110.10">
    <property type="entry name" value="RNA polymerase Rpb2, domain 2"/>
    <property type="match status" value="1"/>
</dbReference>
<dbReference type="HAMAP" id="MF_01321">
    <property type="entry name" value="RNApol_bact_RpoB"/>
    <property type="match status" value="1"/>
</dbReference>
<dbReference type="InterPro" id="IPR042107">
    <property type="entry name" value="DNA-dir_RNA_pol_bsu_ext_1_sf"/>
</dbReference>
<dbReference type="InterPro" id="IPR019462">
    <property type="entry name" value="DNA-dir_RNA_pol_bsu_external_1"/>
</dbReference>
<dbReference type="InterPro" id="IPR015712">
    <property type="entry name" value="DNA-dir_RNA_pol_su2"/>
</dbReference>
<dbReference type="InterPro" id="IPR007120">
    <property type="entry name" value="DNA-dir_RNAP_su2_dom"/>
</dbReference>
<dbReference type="InterPro" id="IPR037033">
    <property type="entry name" value="DNA-dir_RNAP_su2_hyb_sf"/>
</dbReference>
<dbReference type="InterPro" id="IPR010243">
    <property type="entry name" value="RNA_pol_bsu_bac"/>
</dbReference>
<dbReference type="InterPro" id="IPR007121">
    <property type="entry name" value="RNA_pol_bsu_CS"/>
</dbReference>
<dbReference type="InterPro" id="IPR007644">
    <property type="entry name" value="RNA_pol_bsu_protrusion"/>
</dbReference>
<dbReference type="InterPro" id="IPR007642">
    <property type="entry name" value="RNA_pol_Rpb2_2"/>
</dbReference>
<dbReference type="InterPro" id="IPR037034">
    <property type="entry name" value="RNA_pol_Rpb2_2_sf"/>
</dbReference>
<dbReference type="InterPro" id="IPR007645">
    <property type="entry name" value="RNA_pol_Rpb2_3"/>
</dbReference>
<dbReference type="InterPro" id="IPR007641">
    <property type="entry name" value="RNA_pol_Rpb2_7"/>
</dbReference>
<dbReference type="InterPro" id="IPR014724">
    <property type="entry name" value="RNA_pol_RPB2_OB-fold"/>
</dbReference>
<dbReference type="NCBIfam" id="NF001616">
    <property type="entry name" value="PRK00405.1"/>
    <property type="match status" value="1"/>
</dbReference>
<dbReference type="NCBIfam" id="TIGR02013">
    <property type="entry name" value="rpoB"/>
    <property type="match status" value="1"/>
</dbReference>
<dbReference type="PANTHER" id="PTHR20856">
    <property type="entry name" value="DNA-DIRECTED RNA POLYMERASE I SUBUNIT 2"/>
    <property type="match status" value="1"/>
</dbReference>
<dbReference type="Pfam" id="PF04563">
    <property type="entry name" value="RNA_pol_Rpb2_1"/>
    <property type="match status" value="1"/>
</dbReference>
<dbReference type="Pfam" id="PF04561">
    <property type="entry name" value="RNA_pol_Rpb2_2"/>
    <property type="match status" value="2"/>
</dbReference>
<dbReference type="Pfam" id="PF04565">
    <property type="entry name" value="RNA_pol_Rpb2_3"/>
    <property type="match status" value="1"/>
</dbReference>
<dbReference type="Pfam" id="PF10385">
    <property type="entry name" value="RNA_pol_Rpb2_45"/>
    <property type="match status" value="1"/>
</dbReference>
<dbReference type="Pfam" id="PF00562">
    <property type="entry name" value="RNA_pol_Rpb2_6"/>
    <property type="match status" value="1"/>
</dbReference>
<dbReference type="Pfam" id="PF04560">
    <property type="entry name" value="RNA_pol_Rpb2_7"/>
    <property type="match status" value="1"/>
</dbReference>
<dbReference type="SUPFAM" id="SSF64484">
    <property type="entry name" value="beta and beta-prime subunits of DNA dependent RNA-polymerase"/>
    <property type="match status" value="1"/>
</dbReference>
<dbReference type="PROSITE" id="PS01166">
    <property type="entry name" value="RNA_POL_BETA"/>
    <property type="match status" value="1"/>
</dbReference>
<proteinExistence type="inferred from homology"/>
<comment type="function">
    <text evidence="1">DNA-dependent RNA polymerase catalyzes the transcription of DNA into RNA using the four ribonucleoside triphosphates as substrates.</text>
</comment>
<comment type="catalytic activity">
    <reaction evidence="1">
        <text>RNA(n) + a ribonucleoside 5'-triphosphate = RNA(n+1) + diphosphate</text>
        <dbReference type="Rhea" id="RHEA:21248"/>
        <dbReference type="Rhea" id="RHEA-COMP:14527"/>
        <dbReference type="Rhea" id="RHEA-COMP:17342"/>
        <dbReference type="ChEBI" id="CHEBI:33019"/>
        <dbReference type="ChEBI" id="CHEBI:61557"/>
        <dbReference type="ChEBI" id="CHEBI:140395"/>
        <dbReference type="EC" id="2.7.7.6"/>
    </reaction>
</comment>
<comment type="subunit">
    <text evidence="1">The RNAP catalytic core consists of 2 alpha, 1 beta, 1 beta' and 1 omega subunit. When a sigma factor is associated with the core the holoenzyme is formed, which can initiate transcription.</text>
</comment>
<comment type="similarity">
    <text evidence="1">Belongs to the RNA polymerase beta chain family.</text>
</comment>
<organism>
    <name type="scientific">Ralstonia pickettii (strain 12J)</name>
    <dbReference type="NCBI Taxonomy" id="402626"/>
    <lineage>
        <taxon>Bacteria</taxon>
        <taxon>Pseudomonadati</taxon>
        <taxon>Pseudomonadota</taxon>
        <taxon>Betaproteobacteria</taxon>
        <taxon>Burkholderiales</taxon>
        <taxon>Burkholderiaceae</taxon>
        <taxon>Ralstonia</taxon>
    </lineage>
</organism>
<evidence type="ECO:0000255" key="1">
    <source>
        <dbReference type="HAMAP-Rule" id="MF_01321"/>
    </source>
</evidence>
<feature type="chain" id="PRO_1000141724" description="DNA-directed RNA polymerase subunit beta">
    <location>
        <begin position="1"/>
        <end position="1368"/>
    </location>
</feature>
<accession>B2UEN6</accession>
<name>RPOB_RALPJ</name>